<organismHost>
    <name type="scientific">Microplitis demolitor</name>
    <name type="common">Parasitoid wasp</name>
    <dbReference type="NCBI Taxonomy" id="69319"/>
</organismHost>
<accession>Q5I123</accession>
<reference key="1">
    <citation type="journal article" date="2006" name="Virology">
        <title>Polydnavirus genomes reflect their dual roles as mutualists and pathogens.</title>
        <authorList>
            <person name="Webb B.A."/>
            <person name="Strand M.R."/>
            <person name="Dickey S.E."/>
            <person name="Beck M.H."/>
            <person name="Hilgarth R.S."/>
            <person name="Barney W.E."/>
            <person name="Kadash K."/>
            <person name="Kroemer J.A."/>
            <person name="Lindstrom K.G."/>
            <person name="Rattanadechakul W."/>
            <person name="Shelby K.S."/>
            <person name="Thoetkiattikul H."/>
            <person name="Turnbull M.W."/>
            <person name="Witherell R.A."/>
        </authorList>
    </citation>
    <scope>NUCLEOTIDE SEQUENCE [GENOMIC DNA]</scope>
</reference>
<evidence type="ECO:0000256" key="1">
    <source>
        <dbReference type="SAM" id="MobiDB-lite"/>
    </source>
</evidence>
<sequence length="125" mass="13843">MFGDMIELFKPKKELPAVRKCSVINGDVKTFGKAYNDIKLAGKGSKLLKQTSDFSDESSRSDSSSVTNENEVSKAANTRLLHLPMPVNKIKAIALEHELLIKMREIFSEAAKLLESYVALRASVN</sequence>
<organism>
    <name type="scientific">Microplitis demolitor bracovirus (isolate Webb)</name>
    <name type="common">MdBV</name>
    <dbReference type="NCBI Taxonomy" id="654919"/>
    <lineage>
        <taxon>Viruses</taxon>
        <taxon>Viruses incertae sedis</taxon>
        <taxon>Polydnaviriformidae</taxon>
        <taxon>Bracoviriform</taxon>
        <taxon>Microplitis demolitor bracovirus</taxon>
    </lineage>
</organism>
<gene>
    <name type="primary">L1</name>
</gene>
<name>YL1_MDBVW</name>
<keyword id="KW-1185">Reference proteome</keyword>
<protein>
    <recommendedName>
        <fullName>Uncharacterized protein L1</fullName>
    </recommendedName>
</protein>
<proteinExistence type="predicted"/>
<feature type="chain" id="PRO_0000405399" description="Uncharacterized protein L1">
    <location>
        <begin position="1"/>
        <end position="125"/>
    </location>
</feature>
<feature type="region of interest" description="Disordered" evidence="1">
    <location>
        <begin position="50"/>
        <end position="73"/>
    </location>
</feature>
<dbReference type="EMBL" id="AY875690">
    <property type="protein sequence ID" value="AAW51809.1"/>
    <property type="molecule type" value="Genomic_DNA"/>
</dbReference>
<dbReference type="RefSeq" id="YP_239405.1">
    <property type="nucleotide sequence ID" value="NC_007040.1"/>
</dbReference>
<dbReference type="SMR" id="Q5I123"/>
<dbReference type="KEGG" id="vg:5075840"/>
<dbReference type="Proteomes" id="UP000008168">
    <property type="component" value="Genome"/>
</dbReference>